<accession>B3QHS1</accession>
<sequence>MTAVSIRRPIRILGIDPGLRRTGWGVVDSDGNRLVYVACGSVEPRDTLPLAERLLAIHDGLAKVLAAHAPAEAAVEQTFVNKDGAATLKLGQARGVAMLVPAMHGLLVAEYAPNLVKKTVVGAGHADKTQIQMMLKILLPKADPKTADAADALAIAITHAHHRGAAQRLKAVGA</sequence>
<dbReference type="EC" id="3.1.21.10" evidence="1"/>
<dbReference type="EMBL" id="CP001096">
    <property type="protein sequence ID" value="ACE99828.1"/>
    <property type="molecule type" value="Genomic_DNA"/>
</dbReference>
<dbReference type="RefSeq" id="WP_011156663.1">
    <property type="nucleotide sequence ID" value="NC_011004.1"/>
</dbReference>
<dbReference type="SMR" id="B3QHS1"/>
<dbReference type="GeneID" id="66892120"/>
<dbReference type="KEGG" id="rpt:Rpal_1289"/>
<dbReference type="HOGENOM" id="CLU_091257_1_0_5"/>
<dbReference type="OrthoDB" id="9805499at2"/>
<dbReference type="Proteomes" id="UP000001725">
    <property type="component" value="Chromosome"/>
</dbReference>
<dbReference type="GO" id="GO:0005737">
    <property type="term" value="C:cytoplasm"/>
    <property type="evidence" value="ECO:0007669"/>
    <property type="project" value="UniProtKB-SubCell"/>
</dbReference>
<dbReference type="GO" id="GO:0048476">
    <property type="term" value="C:Holliday junction resolvase complex"/>
    <property type="evidence" value="ECO:0007669"/>
    <property type="project" value="UniProtKB-UniRule"/>
</dbReference>
<dbReference type="GO" id="GO:0008821">
    <property type="term" value="F:crossover junction DNA endonuclease activity"/>
    <property type="evidence" value="ECO:0007669"/>
    <property type="project" value="UniProtKB-UniRule"/>
</dbReference>
<dbReference type="GO" id="GO:0003677">
    <property type="term" value="F:DNA binding"/>
    <property type="evidence" value="ECO:0007669"/>
    <property type="project" value="UniProtKB-KW"/>
</dbReference>
<dbReference type="GO" id="GO:0000287">
    <property type="term" value="F:magnesium ion binding"/>
    <property type="evidence" value="ECO:0007669"/>
    <property type="project" value="UniProtKB-UniRule"/>
</dbReference>
<dbReference type="GO" id="GO:0006310">
    <property type="term" value="P:DNA recombination"/>
    <property type="evidence" value="ECO:0007669"/>
    <property type="project" value="UniProtKB-UniRule"/>
</dbReference>
<dbReference type="GO" id="GO:0006281">
    <property type="term" value="P:DNA repair"/>
    <property type="evidence" value="ECO:0007669"/>
    <property type="project" value="UniProtKB-UniRule"/>
</dbReference>
<dbReference type="CDD" id="cd16962">
    <property type="entry name" value="RuvC"/>
    <property type="match status" value="1"/>
</dbReference>
<dbReference type="FunFam" id="3.30.420.10:FF:000002">
    <property type="entry name" value="Crossover junction endodeoxyribonuclease RuvC"/>
    <property type="match status" value="1"/>
</dbReference>
<dbReference type="Gene3D" id="3.30.420.10">
    <property type="entry name" value="Ribonuclease H-like superfamily/Ribonuclease H"/>
    <property type="match status" value="1"/>
</dbReference>
<dbReference type="HAMAP" id="MF_00034">
    <property type="entry name" value="RuvC"/>
    <property type="match status" value="1"/>
</dbReference>
<dbReference type="InterPro" id="IPR012337">
    <property type="entry name" value="RNaseH-like_sf"/>
</dbReference>
<dbReference type="InterPro" id="IPR036397">
    <property type="entry name" value="RNaseH_sf"/>
</dbReference>
<dbReference type="InterPro" id="IPR020563">
    <property type="entry name" value="X-over_junc_endoDNase_Mg_BS"/>
</dbReference>
<dbReference type="InterPro" id="IPR002176">
    <property type="entry name" value="X-over_junc_endoDNase_RuvC"/>
</dbReference>
<dbReference type="NCBIfam" id="TIGR00228">
    <property type="entry name" value="ruvC"/>
    <property type="match status" value="1"/>
</dbReference>
<dbReference type="PANTHER" id="PTHR30194">
    <property type="entry name" value="CROSSOVER JUNCTION ENDODEOXYRIBONUCLEASE RUVC"/>
    <property type="match status" value="1"/>
</dbReference>
<dbReference type="PANTHER" id="PTHR30194:SF3">
    <property type="entry name" value="CROSSOVER JUNCTION ENDODEOXYRIBONUCLEASE RUVC"/>
    <property type="match status" value="1"/>
</dbReference>
<dbReference type="Pfam" id="PF02075">
    <property type="entry name" value="RuvC"/>
    <property type="match status" value="1"/>
</dbReference>
<dbReference type="PRINTS" id="PR00696">
    <property type="entry name" value="RSOLVASERUVC"/>
</dbReference>
<dbReference type="SUPFAM" id="SSF53098">
    <property type="entry name" value="Ribonuclease H-like"/>
    <property type="match status" value="1"/>
</dbReference>
<dbReference type="PROSITE" id="PS01321">
    <property type="entry name" value="RUVC"/>
    <property type="match status" value="1"/>
</dbReference>
<evidence type="ECO:0000255" key="1">
    <source>
        <dbReference type="HAMAP-Rule" id="MF_00034"/>
    </source>
</evidence>
<proteinExistence type="inferred from homology"/>
<reference key="1">
    <citation type="submission" date="2008-05" db="EMBL/GenBank/DDBJ databases">
        <title>Complete sequence of Rhodopseudomonas palustris TIE-1.</title>
        <authorList>
            <consortium name="US DOE Joint Genome Institute"/>
            <person name="Lucas S."/>
            <person name="Copeland A."/>
            <person name="Lapidus A."/>
            <person name="Glavina del Rio T."/>
            <person name="Dalin E."/>
            <person name="Tice H."/>
            <person name="Pitluck S."/>
            <person name="Chain P."/>
            <person name="Malfatti S."/>
            <person name="Shin M."/>
            <person name="Vergez L."/>
            <person name="Lang D."/>
            <person name="Schmutz J."/>
            <person name="Larimer F."/>
            <person name="Land M."/>
            <person name="Hauser L."/>
            <person name="Kyrpides N."/>
            <person name="Mikhailova N."/>
            <person name="Emerson D."/>
            <person name="Newman D.K."/>
            <person name="Roden E."/>
            <person name="Richardson P."/>
        </authorList>
    </citation>
    <scope>NUCLEOTIDE SEQUENCE [LARGE SCALE GENOMIC DNA]</scope>
    <source>
        <strain>TIE-1</strain>
    </source>
</reference>
<comment type="function">
    <text evidence="1">The RuvA-RuvB-RuvC complex processes Holliday junction (HJ) DNA during genetic recombination and DNA repair. Endonuclease that resolves HJ intermediates. Cleaves cruciform DNA by making single-stranded nicks across the HJ at symmetrical positions within the homologous arms, yielding a 5'-phosphate and a 3'-hydroxyl group; requires a central core of homology in the junction. The consensus cleavage sequence is 5'-(A/T)TT(C/G)-3'. Cleavage occurs on the 3'-side of the TT dinucleotide at the point of strand exchange. HJ branch migration catalyzed by RuvA-RuvB allows RuvC to scan DNA until it finds its consensus sequence, where it cleaves and resolves the cruciform DNA.</text>
</comment>
<comment type="catalytic activity">
    <reaction evidence="1">
        <text>Endonucleolytic cleavage at a junction such as a reciprocal single-stranded crossover between two homologous DNA duplexes (Holliday junction).</text>
        <dbReference type="EC" id="3.1.21.10"/>
    </reaction>
</comment>
<comment type="cofactor">
    <cofactor evidence="1">
        <name>Mg(2+)</name>
        <dbReference type="ChEBI" id="CHEBI:18420"/>
    </cofactor>
    <text evidence="1">Binds 2 Mg(2+) ion per subunit.</text>
</comment>
<comment type="subunit">
    <text evidence="1">Homodimer which binds Holliday junction (HJ) DNA. The HJ becomes 2-fold symmetrical on binding to RuvC with unstacked arms; it has a different conformation from HJ DNA in complex with RuvA. In the full resolvosome a probable DNA-RuvA(4)-RuvB(12)-RuvC(2) complex forms which resolves the HJ.</text>
</comment>
<comment type="subcellular location">
    <subcellularLocation>
        <location evidence="1">Cytoplasm</location>
    </subcellularLocation>
</comment>
<comment type="similarity">
    <text evidence="1">Belongs to the RuvC family.</text>
</comment>
<keyword id="KW-0963">Cytoplasm</keyword>
<keyword id="KW-0227">DNA damage</keyword>
<keyword id="KW-0233">DNA recombination</keyword>
<keyword id="KW-0234">DNA repair</keyword>
<keyword id="KW-0238">DNA-binding</keyword>
<keyword id="KW-0255">Endonuclease</keyword>
<keyword id="KW-0378">Hydrolase</keyword>
<keyword id="KW-0460">Magnesium</keyword>
<keyword id="KW-0479">Metal-binding</keyword>
<keyword id="KW-0540">Nuclease</keyword>
<protein>
    <recommendedName>
        <fullName evidence="1">Crossover junction endodeoxyribonuclease RuvC</fullName>
        <ecNumber evidence="1">3.1.21.10</ecNumber>
    </recommendedName>
    <alternativeName>
        <fullName evidence="1">Holliday junction nuclease RuvC</fullName>
    </alternativeName>
    <alternativeName>
        <fullName evidence="1">Holliday junction resolvase RuvC</fullName>
    </alternativeName>
</protein>
<gene>
    <name evidence="1" type="primary">ruvC</name>
    <name type="ordered locus">Rpal_1289</name>
</gene>
<feature type="chain" id="PRO_1000090554" description="Crossover junction endodeoxyribonuclease RuvC">
    <location>
        <begin position="1"/>
        <end position="174"/>
    </location>
</feature>
<feature type="active site" evidence="1">
    <location>
        <position position="16"/>
    </location>
</feature>
<feature type="active site" evidence="1">
    <location>
        <position position="76"/>
    </location>
</feature>
<feature type="active site" evidence="1">
    <location>
        <position position="148"/>
    </location>
</feature>
<feature type="binding site" evidence="1">
    <location>
        <position position="16"/>
    </location>
    <ligand>
        <name>Mg(2+)</name>
        <dbReference type="ChEBI" id="CHEBI:18420"/>
        <label>1</label>
    </ligand>
</feature>
<feature type="binding site" evidence="1">
    <location>
        <position position="76"/>
    </location>
    <ligand>
        <name>Mg(2+)</name>
        <dbReference type="ChEBI" id="CHEBI:18420"/>
        <label>2</label>
    </ligand>
</feature>
<feature type="binding site" evidence="1">
    <location>
        <position position="148"/>
    </location>
    <ligand>
        <name>Mg(2+)</name>
        <dbReference type="ChEBI" id="CHEBI:18420"/>
        <label>1</label>
    </ligand>
</feature>
<name>RUVC_RHOPT</name>
<organism>
    <name type="scientific">Rhodopseudomonas palustris (strain TIE-1)</name>
    <dbReference type="NCBI Taxonomy" id="395960"/>
    <lineage>
        <taxon>Bacteria</taxon>
        <taxon>Pseudomonadati</taxon>
        <taxon>Pseudomonadota</taxon>
        <taxon>Alphaproteobacteria</taxon>
        <taxon>Hyphomicrobiales</taxon>
        <taxon>Nitrobacteraceae</taxon>
        <taxon>Rhodopseudomonas</taxon>
    </lineage>
</organism>